<dbReference type="EMBL" id="AE014298">
    <property type="protein sequence ID" value="AAF48679.3"/>
    <property type="molecule type" value="Genomic_DNA"/>
</dbReference>
<dbReference type="EMBL" id="AE014298">
    <property type="protein sequence ID" value="AGB95472.1"/>
    <property type="molecule type" value="Genomic_DNA"/>
</dbReference>
<dbReference type="EMBL" id="AY060757">
    <property type="protein sequence ID" value="AAL28305.1"/>
    <property type="molecule type" value="mRNA"/>
</dbReference>
<dbReference type="RefSeq" id="NP_001259630.1">
    <property type="nucleotide sequence ID" value="NM_001272701.1"/>
</dbReference>
<dbReference type="RefSeq" id="NP_573176.1">
    <property type="nucleotide sequence ID" value="NM_132948.4"/>
</dbReference>
<dbReference type="SMR" id="Q9VX98"/>
<dbReference type="FunCoup" id="Q9VX98">
    <property type="interactions" value="968"/>
</dbReference>
<dbReference type="IntAct" id="Q9VX98">
    <property type="interactions" value="6"/>
</dbReference>
<dbReference type="STRING" id="7227.FBpp0074121"/>
<dbReference type="PaxDb" id="7227-FBpp0302657"/>
<dbReference type="DNASU" id="32679"/>
<dbReference type="EnsemblMetazoa" id="FBtr0074347">
    <property type="protein sequence ID" value="FBpp0074121"/>
    <property type="gene ID" value="FBgn0030802"/>
</dbReference>
<dbReference type="EnsemblMetazoa" id="FBtr0310520">
    <property type="protein sequence ID" value="FBpp0302657"/>
    <property type="gene ID" value="FBgn0030802"/>
</dbReference>
<dbReference type="GeneID" id="32679"/>
<dbReference type="KEGG" id="dme:Dmel_CG9099"/>
<dbReference type="UCSC" id="CG9099-RA">
    <property type="organism name" value="d. melanogaster"/>
</dbReference>
<dbReference type="AGR" id="FB:FBgn0030802"/>
<dbReference type="CTD" id="8562"/>
<dbReference type="FlyBase" id="FBgn0030802">
    <property type="gene designation" value="DENR"/>
</dbReference>
<dbReference type="VEuPathDB" id="VectorBase:FBgn0030802"/>
<dbReference type="eggNOG" id="KOG3239">
    <property type="taxonomic scope" value="Eukaryota"/>
</dbReference>
<dbReference type="GeneTree" id="ENSGT00390000014349"/>
<dbReference type="HOGENOM" id="CLU_073511_1_0_1"/>
<dbReference type="InParanoid" id="Q9VX98"/>
<dbReference type="OMA" id="PIKVQYC"/>
<dbReference type="OrthoDB" id="277199at2759"/>
<dbReference type="PhylomeDB" id="Q9VX98"/>
<dbReference type="BioGRID-ORCS" id="32679">
    <property type="hits" value="1 hit in 1 CRISPR screen"/>
</dbReference>
<dbReference type="GenomeRNAi" id="32679"/>
<dbReference type="PRO" id="PR:Q9VX98"/>
<dbReference type="Proteomes" id="UP000000803">
    <property type="component" value="Chromosome X"/>
</dbReference>
<dbReference type="Bgee" id="FBgn0030802">
    <property type="expression patterns" value="Expressed in adult middle midgut class II enteroendocrine cell in adult midgut (Drosophila) and 112 other cell types or tissues"/>
</dbReference>
<dbReference type="GO" id="GO:0032991">
    <property type="term" value="C:protein-containing complex"/>
    <property type="evidence" value="ECO:0000353"/>
    <property type="project" value="FlyBase"/>
</dbReference>
<dbReference type="GO" id="GO:0048027">
    <property type="term" value="F:mRNA 5'-UTR binding"/>
    <property type="evidence" value="ECO:0000314"/>
    <property type="project" value="FlyBase"/>
</dbReference>
<dbReference type="GO" id="GO:0003743">
    <property type="term" value="F:translation initiation factor activity"/>
    <property type="evidence" value="ECO:0007669"/>
    <property type="project" value="InterPro"/>
</dbReference>
<dbReference type="GO" id="GO:0001731">
    <property type="term" value="P:formation of translation preinitiation complex"/>
    <property type="evidence" value="ECO:0000318"/>
    <property type="project" value="GO_Central"/>
</dbReference>
<dbReference type="GO" id="GO:0120142">
    <property type="term" value="P:positive regulation of ecdysone receptor signaling pathway"/>
    <property type="evidence" value="ECO:0000315"/>
    <property type="project" value="FlyBase"/>
</dbReference>
<dbReference type="GO" id="GO:0046628">
    <property type="term" value="P:positive regulation of insulin receptor signaling pathway"/>
    <property type="evidence" value="ECO:0000315"/>
    <property type="project" value="FlyBase"/>
</dbReference>
<dbReference type="GO" id="GO:0006417">
    <property type="term" value="P:regulation of translation"/>
    <property type="evidence" value="ECO:0007669"/>
    <property type="project" value="UniProtKB-KW"/>
</dbReference>
<dbReference type="GO" id="GO:0002188">
    <property type="term" value="P:translation reinitiation"/>
    <property type="evidence" value="ECO:0000314"/>
    <property type="project" value="FlyBase"/>
</dbReference>
<dbReference type="CDD" id="cd11607">
    <property type="entry name" value="DENR_C"/>
    <property type="match status" value="1"/>
</dbReference>
<dbReference type="FunFam" id="3.30.780.10:FF:000004">
    <property type="entry name" value="density-regulated protein-like"/>
    <property type="match status" value="1"/>
</dbReference>
<dbReference type="Gene3D" id="3.30.780.10">
    <property type="entry name" value="SUI1-like domain"/>
    <property type="match status" value="1"/>
</dbReference>
<dbReference type="InterPro" id="IPR050318">
    <property type="entry name" value="DENR/SUI1_TIF"/>
</dbReference>
<dbReference type="InterPro" id="IPR046447">
    <property type="entry name" value="DENR_C"/>
</dbReference>
<dbReference type="InterPro" id="IPR005873">
    <property type="entry name" value="DENR_eukaryotes"/>
</dbReference>
<dbReference type="InterPro" id="IPR048517">
    <property type="entry name" value="DENR_N"/>
</dbReference>
<dbReference type="InterPro" id="IPR001950">
    <property type="entry name" value="SUI1"/>
</dbReference>
<dbReference type="InterPro" id="IPR036877">
    <property type="entry name" value="SUI1_dom_sf"/>
</dbReference>
<dbReference type="NCBIfam" id="TIGR01159">
    <property type="entry name" value="DRP1"/>
    <property type="match status" value="1"/>
</dbReference>
<dbReference type="PANTHER" id="PTHR12789:SF0">
    <property type="entry name" value="DENSITY-REGULATED PROTEIN"/>
    <property type="match status" value="1"/>
</dbReference>
<dbReference type="PANTHER" id="PTHR12789">
    <property type="entry name" value="DENSITY-REGULATED PROTEIN HOMOLOG"/>
    <property type="match status" value="1"/>
</dbReference>
<dbReference type="Pfam" id="PF21023">
    <property type="entry name" value="DENR_N"/>
    <property type="match status" value="1"/>
</dbReference>
<dbReference type="Pfam" id="PF01253">
    <property type="entry name" value="SUI1"/>
    <property type="match status" value="1"/>
</dbReference>
<dbReference type="SUPFAM" id="SSF55159">
    <property type="entry name" value="eIF1-like"/>
    <property type="match status" value="1"/>
</dbReference>
<dbReference type="PROSITE" id="PS50296">
    <property type="entry name" value="SUI1"/>
    <property type="match status" value="1"/>
</dbReference>
<sequence>MTNEDVGTNSVADRLQLGPREGVTYPIQMKYCGHCTMPIEYCEYYPEYEKCKEWLELHMPDDFERLKIEEEAAAADGTDDDKKRQKRGGKGLLRVKKKEDVPKRICVSRAARGKKKSVTVVTGLSTFDIDLKVAAKFFGTKFACGSSVTGDDEIVIQGDVKDDLFDVIPEKWAEIDEDVIEDLGDQKRT</sequence>
<reference evidence="5" key="1">
    <citation type="journal article" date="2000" name="Science">
        <title>The genome sequence of Drosophila melanogaster.</title>
        <authorList>
            <person name="Adams M.D."/>
            <person name="Celniker S.E."/>
            <person name="Holt R.A."/>
            <person name="Evans C.A."/>
            <person name="Gocayne J.D."/>
            <person name="Amanatides P.G."/>
            <person name="Scherer S.E."/>
            <person name="Li P.W."/>
            <person name="Hoskins R.A."/>
            <person name="Galle R.F."/>
            <person name="George R.A."/>
            <person name="Lewis S.E."/>
            <person name="Richards S."/>
            <person name="Ashburner M."/>
            <person name="Henderson S.N."/>
            <person name="Sutton G.G."/>
            <person name="Wortman J.R."/>
            <person name="Yandell M.D."/>
            <person name="Zhang Q."/>
            <person name="Chen L.X."/>
            <person name="Brandon R.C."/>
            <person name="Rogers Y.-H.C."/>
            <person name="Blazej R.G."/>
            <person name="Champe M."/>
            <person name="Pfeiffer B.D."/>
            <person name="Wan K.H."/>
            <person name="Doyle C."/>
            <person name="Baxter E.G."/>
            <person name="Helt G."/>
            <person name="Nelson C.R."/>
            <person name="Miklos G.L.G."/>
            <person name="Abril J.F."/>
            <person name="Agbayani A."/>
            <person name="An H.-J."/>
            <person name="Andrews-Pfannkoch C."/>
            <person name="Baldwin D."/>
            <person name="Ballew R.M."/>
            <person name="Basu A."/>
            <person name="Baxendale J."/>
            <person name="Bayraktaroglu L."/>
            <person name="Beasley E.M."/>
            <person name="Beeson K.Y."/>
            <person name="Benos P.V."/>
            <person name="Berman B.P."/>
            <person name="Bhandari D."/>
            <person name="Bolshakov S."/>
            <person name="Borkova D."/>
            <person name="Botchan M.R."/>
            <person name="Bouck J."/>
            <person name="Brokstein P."/>
            <person name="Brottier P."/>
            <person name="Burtis K.C."/>
            <person name="Busam D.A."/>
            <person name="Butler H."/>
            <person name="Cadieu E."/>
            <person name="Center A."/>
            <person name="Chandra I."/>
            <person name="Cherry J.M."/>
            <person name="Cawley S."/>
            <person name="Dahlke C."/>
            <person name="Davenport L.B."/>
            <person name="Davies P."/>
            <person name="de Pablos B."/>
            <person name="Delcher A."/>
            <person name="Deng Z."/>
            <person name="Mays A.D."/>
            <person name="Dew I."/>
            <person name="Dietz S.M."/>
            <person name="Dodson K."/>
            <person name="Doup L.E."/>
            <person name="Downes M."/>
            <person name="Dugan-Rocha S."/>
            <person name="Dunkov B.C."/>
            <person name="Dunn P."/>
            <person name="Durbin K.J."/>
            <person name="Evangelista C.C."/>
            <person name="Ferraz C."/>
            <person name="Ferriera S."/>
            <person name="Fleischmann W."/>
            <person name="Fosler C."/>
            <person name="Gabrielian A.E."/>
            <person name="Garg N.S."/>
            <person name="Gelbart W.M."/>
            <person name="Glasser K."/>
            <person name="Glodek A."/>
            <person name="Gong F."/>
            <person name="Gorrell J.H."/>
            <person name="Gu Z."/>
            <person name="Guan P."/>
            <person name="Harris M."/>
            <person name="Harris N.L."/>
            <person name="Harvey D.A."/>
            <person name="Heiman T.J."/>
            <person name="Hernandez J.R."/>
            <person name="Houck J."/>
            <person name="Hostin D."/>
            <person name="Houston K.A."/>
            <person name="Howland T.J."/>
            <person name="Wei M.-H."/>
            <person name="Ibegwam C."/>
            <person name="Jalali M."/>
            <person name="Kalush F."/>
            <person name="Karpen G.H."/>
            <person name="Ke Z."/>
            <person name="Kennison J.A."/>
            <person name="Ketchum K.A."/>
            <person name="Kimmel B.E."/>
            <person name="Kodira C.D."/>
            <person name="Kraft C.L."/>
            <person name="Kravitz S."/>
            <person name="Kulp D."/>
            <person name="Lai Z."/>
            <person name="Lasko P."/>
            <person name="Lei Y."/>
            <person name="Levitsky A.A."/>
            <person name="Li J.H."/>
            <person name="Li Z."/>
            <person name="Liang Y."/>
            <person name="Lin X."/>
            <person name="Liu X."/>
            <person name="Mattei B."/>
            <person name="McIntosh T.C."/>
            <person name="McLeod M.P."/>
            <person name="McPherson D."/>
            <person name="Merkulov G."/>
            <person name="Milshina N.V."/>
            <person name="Mobarry C."/>
            <person name="Morris J."/>
            <person name="Moshrefi A."/>
            <person name="Mount S.M."/>
            <person name="Moy M."/>
            <person name="Murphy B."/>
            <person name="Murphy L."/>
            <person name="Muzny D.M."/>
            <person name="Nelson D.L."/>
            <person name="Nelson D.R."/>
            <person name="Nelson K.A."/>
            <person name="Nixon K."/>
            <person name="Nusskern D.R."/>
            <person name="Pacleb J.M."/>
            <person name="Palazzolo M."/>
            <person name="Pittman G.S."/>
            <person name="Pan S."/>
            <person name="Pollard J."/>
            <person name="Puri V."/>
            <person name="Reese M.G."/>
            <person name="Reinert K."/>
            <person name="Remington K."/>
            <person name="Saunders R.D.C."/>
            <person name="Scheeler F."/>
            <person name="Shen H."/>
            <person name="Shue B.C."/>
            <person name="Siden-Kiamos I."/>
            <person name="Simpson M."/>
            <person name="Skupski M.P."/>
            <person name="Smith T.J."/>
            <person name="Spier E."/>
            <person name="Spradling A.C."/>
            <person name="Stapleton M."/>
            <person name="Strong R."/>
            <person name="Sun E."/>
            <person name="Svirskas R."/>
            <person name="Tector C."/>
            <person name="Turner R."/>
            <person name="Venter E."/>
            <person name="Wang A.H."/>
            <person name="Wang X."/>
            <person name="Wang Z.-Y."/>
            <person name="Wassarman D.A."/>
            <person name="Weinstock G.M."/>
            <person name="Weissenbach J."/>
            <person name="Williams S.M."/>
            <person name="Woodage T."/>
            <person name="Worley K.C."/>
            <person name="Wu D."/>
            <person name="Yang S."/>
            <person name="Yao Q.A."/>
            <person name="Ye J."/>
            <person name="Yeh R.-F."/>
            <person name="Zaveri J.S."/>
            <person name="Zhan M."/>
            <person name="Zhang G."/>
            <person name="Zhao Q."/>
            <person name="Zheng L."/>
            <person name="Zheng X.H."/>
            <person name="Zhong F.N."/>
            <person name="Zhong W."/>
            <person name="Zhou X."/>
            <person name="Zhu S.C."/>
            <person name="Zhu X."/>
            <person name="Smith H.O."/>
            <person name="Gibbs R.A."/>
            <person name="Myers E.W."/>
            <person name="Rubin G.M."/>
            <person name="Venter J.C."/>
        </authorList>
    </citation>
    <scope>NUCLEOTIDE SEQUENCE [LARGE SCALE GENOMIC DNA]</scope>
    <source>
        <strain>Berkeley</strain>
    </source>
</reference>
<reference evidence="5" key="2">
    <citation type="journal article" date="2002" name="Genome Biol.">
        <title>Annotation of the Drosophila melanogaster euchromatic genome: a systematic review.</title>
        <authorList>
            <person name="Misra S."/>
            <person name="Crosby M.A."/>
            <person name="Mungall C.J."/>
            <person name="Matthews B.B."/>
            <person name="Campbell K.S."/>
            <person name="Hradecky P."/>
            <person name="Huang Y."/>
            <person name="Kaminker J.S."/>
            <person name="Millburn G.H."/>
            <person name="Prochnik S.E."/>
            <person name="Smith C.D."/>
            <person name="Tupy J.L."/>
            <person name="Whitfield E.J."/>
            <person name="Bayraktaroglu L."/>
            <person name="Berman B.P."/>
            <person name="Bettencourt B.R."/>
            <person name="Celniker S.E."/>
            <person name="de Grey A.D.N.J."/>
            <person name="Drysdale R.A."/>
            <person name="Harris N.L."/>
            <person name="Richter J."/>
            <person name="Russo S."/>
            <person name="Schroeder A.J."/>
            <person name="Shu S.Q."/>
            <person name="Stapleton M."/>
            <person name="Yamada C."/>
            <person name="Ashburner M."/>
            <person name="Gelbart W.M."/>
            <person name="Rubin G.M."/>
            <person name="Lewis S.E."/>
        </authorList>
    </citation>
    <scope>GENOME REANNOTATION</scope>
    <source>
        <strain evidence="8">Berkeley</strain>
    </source>
</reference>
<reference evidence="6" key="3">
    <citation type="journal article" date="2002" name="Genome Biol.">
        <title>A Drosophila full-length cDNA resource.</title>
        <authorList>
            <person name="Stapleton M."/>
            <person name="Carlson J.W."/>
            <person name="Brokstein P."/>
            <person name="Yu C."/>
            <person name="Champe M."/>
            <person name="George R.A."/>
            <person name="Guarin H."/>
            <person name="Kronmiller B."/>
            <person name="Pacleb J.M."/>
            <person name="Park S."/>
            <person name="Wan K.H."/>
            <person name="Rubin G.M."/>
            <person name="Celniker S.E."/>
        </authorList>
    </citation>
    <scope>NUCLEOTIDE SEQUENCE [LARGE SCALE MRNA]</scope>
    <source>
        <strain evidence="6">Berkeley</strain>
        <tissue evidence="6">Head</tissue>
    </source>
</reference>
<reference evidence="4" key="4">
    <citation type="journal article" date="2014" name="Nature">
        <title>DENR-MCT-1 promotes translation re-initiation downstream of uORFs to control tissue growth.</title>
        <authorList>
            <person name="Schleich S."/>
            <person name="Strassburger K."/>
            <person name="Janiesch P.C."/>
            <person name="Koledachkina T."/>
            <person name="Miller K.K."/>
            <person name="Haneke K."/>
            <person name="Cheng Y.S."/>
            <person name="Kuchler K."/>
            <person name="Stoecklin G."/>
            <person name="Duncan K.E."/>
            <person name="Teleman A.A."/>
        </authorList>
    </citation>
    <scope>FUNCTION</scope>
    <scope>INTERACTION WITH MCTS1</scope>
    <scope>DISRUPTION PHENOTYPE</scope>
</reference>
<feature type="chain" id="PRO_0000432074" description="Density-regulated protein homolog" evidence="4">
    <location>
        <begin position="1"/>
        <end position="189"/>
    </location>
</feature>
<feature type="domain" description="SUI1" evidence="1">
    <location>
        <begin position="105"/>
        <end position="172"/>
    </location>
</feature>
<gene>
    <name evidence="7" type="primary">DENR</name>
    <name evidence="7" type="ORF">CG9099</name>
</gene>
<name>DENR_DROME</name>
<accession>Q9VX98</accession>
<accession>Q95SJ6</accession>
<protein>
    <recommendedName>
        <fullName evidence="3">Density-regulated protein homolog</fullName>
    </recommendedName>
</protein>
<organism evidence="5">
    <name type="scientific">Drosophila melanogaster</name>
    <name type="common">Fruit fly</name>
    <dbReference type="NCBI Taxonomy" id="7227"/>
    <lineage>
        <taxon>Eukaryota</taxon>
        <taxon>Metazoa</taxon>
        <taxon>Ecdysozoa</taxon>
        <taxon>Arthropoda</taxon>
        <taxon>Hexapoda</taxon>
        <taxon>Insecta</taxon>
        <taxon>Pterygota</taxon>
        <taxon>Neoptera</taxon>
        <taxon>Endopterygota</taxon>
        <taxon>Diptera</taxon>
        <taxon>Brachycera</taxon>
        <taxon>Muscomorpha</taxon>
        <taxon>Ephydroidea</taxon>
        <taxon>Drosophilidae</taxon>
        <taxon>Drosophila</taxon>
        <taxon>Sophophora</taxon>
    </lineage>
</organism>
<proteinExistence type="evidence at protein level"/>
<evidence type="ECO:0000255" key="1">
    <source>
        <dbReference type="PROSITE-ProRule" id="PRU00200"/>
    </source>
</evidence>
<evidence type="ECO:0000269" key="2">
    <source>
    </source>
</evidence>
<evidence type="ECO:0000303" key="3">
    <source>
    </source>
</evidence>
<evidence type="ECO:0000305" key="4"/>
<evidence type="ECO:0000312" key="5">
    <source>
        <dbReference type="EMBL" id="AAF48679.3"/>
    </source>
</evidence>
<evidence type="ECO:0000312" key="6">
    <source>
        <dbReference type="EMBL" id="AAL28305.1"/>
    </source>
</evidence>
<evidence type="ECO:0000312" key="7">
    <source>
        <dbReference type="FlyBase" id="FBgn0030802"/>
    </source>
</evidence>
<evidence type="ECO:0000312" key="8">
    <source>
        <dbReference type="Proteomes" id="UP000000803"/>
    </source>
</evidence>
<keyword id="KW-1185">Reference proteome</keyword>
<keyword id="KW-0810">Translation regulation</keyword>
<comment type="function">
    <text evidence="2">Regulates translation as part of a complex with MCTS1. Specifically required for translational re-initiation in mRNAs containing upstream open reading frames (uORFs). Not required for standard translational initiation. Regulates expression of a subset of gene products including mbc, InR and EcR.</text>
</comment>
<comment type="subunit">
    <text evidence="2">Interacts with MCTS1.</text>
</comment>
<comment type="interaction">
    <interactant intactId="EBI-184858">
        <id>Q9VX98</id>
    </interactant>
    <interactant intactId="EBI-175444">
        <id>Q9W445</id>
        <label>MCTS1</label>
    </interactant>
    <organismsDiffer>false</organismsDiffer>
    <experiments>2</experiments>
</comment>
<comment type="disruption phenotype">
    <text evidence="2">Animals die as pharate adults with crooked legs, abnormal genitalia and a larval-like epidermis. Proliferation of histoblast cells is impaired.</text>
</comment>
<comment type="similarity">
    <text evidence="4">Belongs to the DENR family.</text>
</comment>